<evidence type="ECO:0000250" key="1"/>
<evidence type="ECO:0000305" key="2"/>
<evidence type="ECO:0000305" key="3">
    <source>
    </source>
</evidence>
<comment type="function">
    <text evidence="1">Binds to actin and affects the structure of the cytoskeleton. At high concentrations, profilin prevents the polymerization of actin, whereas it enhances it at low concentrations (By similarity).</text>
</comment>
<comment type="subunit">
    <text evidence="1">Occurs in many kinds of cells as a complex with monomeric actin in a 1:1 ratio.</text>
</comment>
<comment type="subcellular location">
    <subcellularLocation>
        <location evidence="1">Cytoplasm</location>
        <location evidence="1">Cytoskeleton</location>
    </subcellularLocation>
</comment>
<comment type="PTM">
    <text evidence="1">Phosphorylated by MAP kinases.</text>
</comment>
<comment type="polymorphism">
    <text>Several isoforms of the allergen exist due to polymorphism.</text>
</comment>
<comment type="allergen">
    <text>Causes an allergic reaction in human.</text>
</comment>
<comment type="miscellaneous">
    <text evidence="3">The variability of the residues taking part of IgE-binding epitopes might be responsible of the difference in cross-reactivity among olive pollen cultivars, and between distantly related pollen species, leading to a variable range of allergy reactions among atopic patients.</text>
</comment>
<comment type="similarity">
    <text evidence="2">Belongs to the profilin family.</text>
</comment>
<proteinExistence type="evidence at protein level"/>
<name>PRO11_MAIZE</name>
<keyword id="KW-0009">Actin-binding</keyword>
<keyword id="KW-0020">Allergen</keyword>
<keyword id="KW-0963">Cytoplasm</keyword>
<keyword id="KW-0206">Cytoskeleton</keyword>
<keyword id="KW-1015">Disulfide bond</keyword>
<keyword id="KW-0597">Phosphoprotein</keyword>
<keyword id="KW-1185">Reference proteome</keyword>
<protein>
    <recommendedName>
        <fullName>Profilin-11</fullName>
    </recommendedName>
    <alternativeName>
        <fullName>Pollen allergen Zea m 12</fullName>
    </alternativeName>
    <alternativeName>
        <fullName>Pollen profilin variant 6</fullName>
    </alternativeName>
    <allergenName>Zea m 12</allergenName>
</protein>
<organism>
    <name type="scientific">Zea mays</name>
    <name type="common">Maize</name>
    <dbReference type="NCBI Taxonomy" id="4577"/>
    <lineage>
        <taxon>Eukaryota</taxon>
        <taxon>Viridiplantae</taxon>
        <taxon>Streptophyta</taxon>
        <taxon>Embryophyta</taxon>
        <taxon>Tracheophyta</taxon>
        <taxon>Spermatophyta</taxon>
        <taxon>Magnoliopsida</taxon>
        <taxon>Liliopsida</taxon>
        <taxon>Poales</taxon>
        <taxon>Poaceae</taxon>
        <taxon>PACMAD clade</taxon>
        <taxon>Panicoideae</taxon>
        <taxon>Andropogonodae</taxon>
        <taxon>Andropogoneae</taxon>
        <taxon>Tripsacinae</taxon>
        <taxon>Zea</taxon>
    </lineage>
</organism>
<dbReference type="EMBL" id="DQ663564">
    <property type="protein sequence ID" value="ABG81317.1"/>
    <property type="molecule type" value="mRNA"/>
</dbReference>
<dbReference type="SMR" id="A4KA60"/>
<dbReference type="FunCoup" id="A4KA60">
    <property type="interactions" value="773"/>
</dbReference>
<dbReference type="STRING" id="4577.A4KA60"/>
<dbReference type="Allergome" id="682">
    <property type="allergen name" value="Zea m 12"/>
</dbReference>
<dbReference type="InParanoid" id="A4KA60"/>
<dbReference type="Proteomes" id="UP000007305">
    <property type="component" value="Unplaced"/>
</dbReference>
<dbReference type="ExpressionAtlas" id="A4KA60">
    <property type="expression patterns" value="baseline and differential"/>
</dbReference>
<dbReference type="GO" id="GO:0005938">
    <property type="term" value="C:cell cortex"/>
    <property type="evidence" value="ECO:0000318"/>
    <property type="project" value="GO_Central"/>
</dbReference>
<dbReference type="GO" id="GO:0005856">
    <property type="term" value="C:cytoskeleton"/>
    <property type="evidence" value="ECO:0007669"/>
    <property type="project" value="UniProtKB-SubCell"/>
</dbReference>
<dbReference type="GO" id="GO:0003785">
    <property type="term" value="F:actin monomer binding"/>
    <property type="evidence" value="ECO:0000318"/>
    <property type="project" value="GO_Central"/>
</dbReference>
<dbReference type="GO" id="GO:0070064">
    <property type="term" value="F:proline-rich region binding"/>
    <property type="evidence" value="ECO:0007669"/>
    <property type="project" value="UniProtKB-ARBA"/>
</dbReference>
<dbReference type="GO" id="GO:0007097">
    <property type="term" value="P:nuclear migration"/>
    <property type="evidence" value="ECO:0007669"/>
    <property type="project" value="UniProtKB-ARBA"/>
</dbReference>
<dbReference type="GO" id="GO:0032956">
    <property type="term" value="P:regulation of actin cytoskeleton organization"/>
    <property type="evidence" value="ECO:0007669"/>
    <property type="project" value="UniProtKB-ARBA"/>
</dbReference>
<dbReference type="CDD" id="cd00148">
    <property type="entry name" value="PROF"/>
    <property type="match status" value="1"/>
</dbReference>
<dbReference type="FunFam" id="3.30.450.30:FF:000001">
    <property type="entry name" value="Profilin"/>
    <property type="match status" value="1"/>
</dbReference>
<dbReference type="Gene3D" id="3.30.450.30">
    <property type="entry name" value="Dynein light chain 2a, cytoplasmic"/>
    <property type="match status" value="1"/>
</dbReference>
<dbReference type="InterPro" id="IPR048278">
    <property type="entry name" value="PFN"/>
</dbReference>
<dbReference type="InterPro" id="IPR005455">
    <property type="entry name" value="PFN_euk"/>
</dbReference>
<dbReference type="InterPro" id="IPR036140">
    <property type="entry name" value="PFN_sf"/>
</dbReference>
<dbReference type="InterPro" id="IPR027310">
    <property type="entry name" value="Profilin_CS"/>
</dbReference>
<dbReference type="PANTHER" id="PTHR11604">
    <property type="entry name" value="PROFILIN"/>
    <property type="match status" value="1"/>
</dbReference>
<dbReference type="PANTHER" id="PTHR11604:SF51">
    <property type="entry name" value="PROFILIN-A"/>
    <property type="match status" value="1"/>
</dbReference>
<dbReference type="Pfam" id="PF00235">
    <property type="entry name" value="Profilin"/>
    <property type="match status" value="1"/>
</dbReference>
<dbReference type="PRINTS" id="PR00392">
    <property type="entry name" value="PROFILIN"/>
</dbReference>
<dbReference type="PRINTS" id="PR01640">
    <property type="entry name" value="PROFILINPLNT"/>
</dbReference>
<dbReference type="SMART" id="SM00392">
    <property type="entry name" value="PROF"/>
    <property type="match status" value="1"/>
</dbReference>
<dbReference type="SUPFAM" id="SSF55770">
    <property type="entry name" value="Profilin (actin-binding protein)"/>
    <property type="match status" value="1"/>
</dbReference>
<dbReference type="PROSITE" id="PS00414">
    <property type="entry name" value="PROFILIN"/>
    <property type="match status" value="1"/>
</dbReference>
<feature type="initiator methionine" description="Removed" evidence="1">
    <location>
        <position position="1"/>
    </location>
</feature>
<feature type="chain" id="PRO_0000425070" description="Profilin-11">
    <location>
        <begin position="2"/>
        <end position="131"/>
    </location>
</feature>
<feature type="short sequence motif" description="Involved in PIP2 interaction">
    <location>
        <begin position="81"/>
        <end position="97"/>
    </location>
</feature>
<feature type="modified residue" description="Phosphothreonine" evidence="1">
    <location>
        <position position="111"/>
    </location>
</feature>
<feature type="disulfide bond" evidence="3">
    <location>
        <begin position="13"/>
        <end position="115"/>
    </location>
</feature>
<reference key="1">
    <citation type="journal article" date="2012" name="PLoS ONE">
        <title>Characterization of profilin polymorphism in pollen with a focus on multifunctionality.</title>
        <authorList>
            <person name="Jimenez-Lopez J.C."/>
            <person name="Morales S."/>
            <person name="Castro A.J."/>
            <person name="Volkmann D."/>
            <person name="Rodriguez-Garcia M.I."/>
            <person name="Alche Jde D."/>
        </authorList>
    </citation>
    <scope>NUCLEOTIDE SEQUENCE [MRNA]</scope>
    <scope>POLYMORPHISM</scope>
    <source>
        <strain>cv. Birko</strain>
    </source>
</reference>
<reference key="2">
    <citation type="journal article" date="2013" name="PLoS ONE">
        <title>Analysis of the effects of polymorphism on pollen profilin structural functionality and the generation of conformational, T- and B-cell epitopes.</title>
        <authorList>
            <person name="Jimenez-Lopez J.C."/>
            <person name="Rodriguez-Garcia M.I."/>
            <person name="Alche J.D."/>
        </authorList>
    </citation>
    <scope>3D-STRUCTURE MODELING</scope>
    <scope>DISULFIDE BOND</scope>
</reference>
<accession>A4KA60</accession>
<sequence length="131" mass="14189">MSWQAYVDEHLMCEIEGHHLTSAAIVGHDGAVWAQSTAFPQSKTEEMTNIMKDFDEPGFLAPTGLFLGPTKYMVIQGEPGAVIRGKKGSGGITVKKTGQAMVVGIYDEPMTPGQCNMVVERLGDYLLEQGL</sequence>